<evidence type="ECO:0000255" key="1">
    <source>
        <dbReference type="HAMAP-Rule" id="MF_01382"/>
    </source>
</evidence>
<evidence type="ECO:0000256" key="2">
    <source>
        <dbReference type="SAM" id="MobiDB-lite"/>
    </source>
</evidence>
<evidence type="ECO:0000305" key="3"/>
<protein>
    <recommendedName>
        <fullName evidence="1">Protein translocase subunit SecA</fullName>
        <ecNumber evidence="1">7.4.2.8</ecNumber>
    </recommendedName>
</protein>
<sequence>MLVKLLTKVFGSRNDRTLRRMRKAVELINQMEPDMEKLSDDELKAKTNEFRARLEKGEVLENLLPEAFAVVRESSKRVFGMRHFDVQLLGGMVLNDRCIAEMRTGEGKTLTATLPAYLNALSGRGVHVVTVNDYLAQRDAENNRPLFEFLGLSIGINLPGMPAPAKREAYAADITYGTNNEYGFDYLRDNMAFSPEERVQRKLHYALVDEVDSILIDEARTPLIISGPAEDSSEMYIRVNKLIPQLIRQEKEDSDSFQGEGHFSVDEKARQVHLTERGLILIEEMLMEAGIMDEGESLYSPTNIMLMHHVTAALRAHVLFTRDVDYIVKDGEVIIVDEHTGRTMQGRRWSDGLHQAVEAKEGVEIQNENQTLASITFQNYFRLYEKLAGMTGTADTEAFEFSSIYKLDTIVVPTNRPMIRKDMPDLVYMTELEKIGAIIEDIRERTVNGQPVLVGTISIEKSEVVSRELTKAGIEHKVLNAKFHAMEADIVAQAGQSSAVTIATNMAGRGTDIVLGGSWQAEIEQLEDPTEEQIAEIKAAWKIRHDAVLAAGGLHIIGTERHESRRIDNQLRGRSGRQGDAGSSRFYLSMEDALMRIFASDRVSSMMRKLGMKEGEAIEHPWVTKAIANAQRKVESRNFDIRKQLLEYDDVANDQRRAIYSQRNELLDVSDVSETITSIREDVFKTTIDGYIQPESLEEEWDIEGLTERLKNDFDLDMPIAEWLDKEPQLHEETLRERILEKAKEEYQRKEEVVGVEMMRNFEKGVMLQTLDSLWKEHLAAMDYLRQGIHLRGYAQKDPKQEYKRESFNMFATMLESLKHEVISVLSKVQVRMPEEVEALELQRREEAERLAKQQQLSHYEENALVTEDPNAPATAERKVGRNDPCPCGSGKKYKQCHGRLQS</sequence>
<keyword id="KW-0067">ATP-binding</keyword>
<keyword id="KW-0997">Cell inner membrane</keyword>
<keyword id="KW-1003">Cell membrane</keyword>
<keyword id="KW-0963">Cytoplasm</keyword>
<keyword id="KW-0472">Membrane</keyword>
<keyword id="KW-0479">Metal-binding</keyword>
<keyword id="KW-0547">Nucleotide-binding</keyword>
<keyword id="KW-0653">Protein transport</keyword>
<keyword id="KW-1278">Translocase</keyword>
<keyword id="KW-0811">Translocation</keyword>
<keyword id="KW-0813">Transport</keyword>
<keyword id="KW-0862">Zinc</keyword>
<accession>A8G9T6</accession>
<feature type="chain" id="PRO_0000320988" description="Protein translocase subunit SecA">
    <location>
        <begin position="1"/>
        <end position="903"/>
    </location>
</feature>
<feature type="region of interest" description="Disordered" evidence="2">
    <location>
        <begin position="853"/>
        <end position="903"/>
    </location>
</feature>
<feature type="compositionally biased region" description="Basic residues" evidence="2">
    <location>
        <begin position="892"/>
        <end position="903"/>
    </location>
</feature>
<feature type="binding site" evidence="1">
    <location>
        <position position="87"/>
    </location>
    <ligand>
        <name>ATP</name>
        <dbReference type="ChEBI" id="CHEBI:30616"/>
    </ligand>
</feature>
<feature type="binding site" evidence="1">
    <location>
        <begin position="105"/>
        <end position="109"/>
    </location>
    <ligand>
        <name>ATP</name>
        <dbReference type="ChEBI" id="CHEBI:30616"/>
    </ligand>
</feature>
<feature type="binding site" evidence="1">
    <location>
        <position position="512"/>
    </location>
    <ligand>
        <name>ATP</name>
        <dbReference type="ChEBI" id="CHEBI:30616"/>
    </ligand>
</feature>
<feature type="binding site" evidence="1">
    <location>
        <position position="886"/>
    </location>
    <ligand>
        <name>Zn(2+)</name>
        <dbReference type="ChEBI" id="CHEBI:29105"/>
    </ligand>
</feature>
<feature type="binding site" evidence="1">
    <location>
        <position position="888"/>
    </location>
    <ligand>
        <name>Zn(2+)</name>
        <dbReference type="ChEBI" id="CHEBI:29105"/>
    </ligand>
</feature>
<feature type="binding site" evidence="1">
    <location>
        <position position="897"/>
    </location>
    <ligand>
        <name>Zn(2+)</name>
        <dbReference type="ChEBI" id="CHEBI:29105"/>
    </ligand>
</feature>
<feature type="binding site" evidence="1">
    <location>
        <position position="898"/>
    </location>
    <ligand>
        <name>Zn(2+)</name>
        <dbReference type="ChEBI" id="CHEBI:29105"/>
    </ligand>
</feature>
<comment type="function">
    <text evidence="1">Part of the Sec protein translocase complex. Interacts with the SecYEG preprotein conducting channel. Has a central role in coupling the hydrolysis of ATP to the transfer of proteins into and across the cell membrane, serving both as a receptor for the preprotein-SecB complex and as an ATP-driven molecular motor driving the stepwise translocation of polypeptide chains across the membrane.</text>
</comment>
<comment type="catalytic activity">
    <reaction evidence="1">
        <text>ATP + H2O + cellular proteinSide 1 = ADP + phosphate + cellular proteinSide 2.</text>
        <dbReference type="EC" id="7.4.2.8"/>
    </reaction>
</comment>
<comment type="cofactor">
    <cofactor evidence="1">
        <name>Zn(2+)</name>
        <dbReference type="ChEBI" id="CHEBI:29105"/>
    </cofactor>
    <text evidence="1">May bind 1 zinc ion per subunit.</text>
</comment>
<comment type="subunit">
    <text evidence="1">Monomer and homodimer. Part of the essential Sec protein translocation apparatus which comprises SecA, SecYEG and auxiliary proteins SecDF-YajC and YidC.</text>
</comment>
<comment type="subcellular location">
    <subcellularLocation>
        <location evidence="1">Cell inner membrane</location>
        <topology evidence="1">Peripheral membrane protein</topology>
        <orientation evidence="1">Cytoplasmic side</orientation>
    </subcellularLocation>
    <subcellularLocation>
        <location evidence="1">Cytoplasm</location>
    </subcellularLocation>
    <text evidence="1">Distribution is 50-50.</text>
</comment>
<comment type="induction">
    <text evidence="1">Repressed under conditions of excess protein secretion capacity and derepressed when protein secretion becomes limiting. This is regulated by SecM.</text>
</comment>
<comment type="similarity">
    <text evidence="1">Belongs to the SecA family.</text>
</comment>
<comment type="sequence caution" evidence="3">
    <conflict type="erroneous initiation">
        <sequence resource="EMBL-CDS" id="ABV39876"/>
    </conflict>
    <text>Extended N-terminus.</text>
</comment>
<dbReference type="EC" id="7.4.2.8" evidence="1"/>
<dbReference type="EMBL" id="CP000826">
    <property type="protein sequence ID" value="ABV39876.1"/>
    <property type="status" value="ALT_INIT"/>
    <property type="molecule type" value="Genomic_DNA"/>
</dbReference>
<dbReference type="SMR" id="A8G9T6"/>
<dbReference type="STRING" id="399741.Spro_0770"/>
<dbReference type="KEGG" id="spe:Spro_0770"/>
<dbReference type="eggNOG" id="COG0653">
    <property type="taxonomic scope" value="Bacteria"/>
</dbReference>
<dbReference type="HOGENOM" id="CLU_005314_3_0_6"/>
<dbReference type="OrthoDB" id="9805579at2"/>
<dbReference type="GO" id="GO:0031522">
    <property type="term" value="C:cell envelope Sec protein transport complex"/>
    <property type="evidence" value="ECO:0007669"/>
    <property type="project" value="TreeGrafter"/>
</dbReference>
<dbReference type="GO" id="GO:0005829">
    <property type="term" value="C:cytosol"/>
    <property type="evidence" value="ECO:0007669"/>
    <property type="project" value="TreeGrafter"/>
</dbReference>
<dbReference type="GO" id="GO:0005886">
    <property type="term" value="C:plasma membrane"/>
    <property type="evidence" value="ECO:0007669"/>
    <property type="project" value="UniProtKB-SubCell"/>
</dbReference>
<dbReference type="GO" id="GO:0005524">
    <property type="term" value="F:ATP binding"/>
    <property type="evidence" value="ECO:0007669"/>
    <property type="project" value="UniProtKB-UniRule"/>
</dbReference>
<dbReference type="GO" id="GO:0046872">
    <property type="term" value="F:metal ion binding"/>
    <property type="evidence" value="ECO:0007669"/>
    <property type="project" value="UniProtKB-KW"/>
</dbReference>
<dbReference type="GO" id="GO:0008564">
    <property type="term" value="F:protein-exporting ATPase activity"/>
    <property type="evidence" value="ECO:0007669"/>
    <property type="project" value="UniProtKB-EC"/>
</dbReference>
<dbReference type="GO" id="GO:0065002">
    <property type="term" value="P:intracellular protein transmembrane transport"/>
    <property type="evidence" value="ECO:0007669"/>
    <property type="project" value="UniProtKB-UniRule"/>
</dbReference>
<dbReference type="GO" id="GO:0017038">
    <property type="term" value="P:protein import"/>
    <property type="evidence" value="ECO:0007669"/>
    <property type="project" value="InterPro"/>
</dbReference>
<dbReference type="GO" id="GO:0006605">
    <property type="term" value="P:protein targeting"/>
    <property type="evidence" value="ECO:0007669"/>
    <property type="project" value="UniProtKB-UniRule"/>
</dbReference>
<dbReference type="GO" id="GO:0043952">
    <property type="term" value="P:protein transport by the Sec complex"/>
    <property type="evidence" value="ECO:0007669"/>
    <property type="project" value="TreeGrafter"/>
</dbReference>
<dbReference type="CDD" id="cd17928">
    <property type="entry name" value="DEXDc_SecA"/>
    <property type="match status" value="1"/>
</dbReference>
<dbReference type="CDD" id="cd18803">
    <property type="entry name" value="SF2_C_secA"/>
    <property type="match status" value="1"/>
</dbReference>
<dbReference type="FunFam" id="1.10.3060.10:FF:000001">
    <property type="entry name" value="Preprotein translocase subunit SecA"/>
    <property type="match status" value="1"/>
</dbReference>
<dbReference type="FunFam" id="3.40.50.300:FF:000081">
    <property type="entry name" value="Preprotein translocase subunit SecA"/>
    <property type="match status" value="1"/>
</dbReference>
<dbReference type="FunFam" id="3.40.50.300:FF:000113">
    <property type="entry name" value="Preprotein translocase subunit SecA"/>
    <property type="match status" value="1"/>
</dbReference>
<dbReference type="FunFam" id="3.90.1440.10:FF:000001">
    <property type="entry name" value="Preprotein translocase subunit SecA"/>
    <property type="match status" value="1"/>
</dbReference>
<dbReference type="Gene3D" id="1.10.3060.10">
    <property type="entry name" value="Helical scaffold and wing domains of SecA"/>
    <property type="match status" value="1"/>
</dbReference>
<dbReference type="Gene3D" id="3.40.50.300">
    <property type="entry name" value="P-loop containing nucleotide triphosphate hydrolases"/>
    <property type="match status" value="2"/>
</dbReference>
<dbReference type="Gene3D" id="3.90.1440.10">
    <property type="entry name" value="SecA, preprotein cross-linking domain"/>
    <property type="match status" value="1"/>
</dbReference>
<dbReference type="HAMAP" id="MF_01382">
    <property type="entry name" value="SecA"/>
    <property type="match status" value="1"/>
</dbReference>
<dbReference type="InterPro" id="IPR014001">
    <property type="entry name" value="Helicase_ATP-bd"/>
</dbReference>
<dbReference type="InterPro" id="IPR027417">
    <property type="entry name" value="P-loop_NTPase"/>
</dbReference>
<dbReference type="InterPro" id="IPR004027">
    <property type="entry name" value="SEC_C_motif"/>
</dbReference>
<dbReference type="InterPro" id="IPR000185">
    <property type="entry name" value="SecA"/>
</dbReference>
<dbReference type="InterPro" id="IPR020937">
    <property type="entry name" value="SecA_CS"/>
</dbReference>
<dbReference type="InterPro" id="IPR011115">
    <property type="entry name" value="SecA_DEAD"/>
</dbReference>
<dbReference type="InterPro" id="IPR014018">
    <property type="entry name" value="SecA_motor_DEAD"/>
</dbReference>
<dbReference type="InterPro" id="IPR011130">
    <property type="entry name" value="SecA_preprotein_X-link_dom"/>
</dbReference>
<dbReference type="InterPro" id="IPR044722">
    <property type="entry name" value="SecA_SF2_C"/>
</dbReference>
<dbReference type="InterPro" id="IPR011116">
    <property type="entry name" value="SecA_Wing/Scaffold"/>
</dbReference>
<dbReference type="InterPro" id="IPR036266">
    <property type="entry name" value="SecA_Wing/Scaffold_sf"/>
</dbReference>
<dbReference type="InterPro" id="IPR036670">
    <property type="entry name" value="SecA_X-link_sf"/>
</dbReference>
<dbReference type="NCBIfam" id="NF009538">
    <property type="entry name" value="PRK12904.1"/>
    <property type="match status" value="1"/>
</dbReference>
<dbReference type="NCBIfam" id="TIGR00963">
    <property type="entry name" value="secA"/>
    <property type="match status" value="1"/>
</dbReference>
<dbReference type="PANTHER" id="PTHR30612:SF0">
    <property type="entry name" value="CHLOROPLAST PROTEIN-TRANSPORTING ATPASE"/>
    <property type="match status" value="1"/>
</dbReference>
<dbReference type="PANTHER" id="PTHR30612">
    <property type="entry name" value="SECA INNER MEMBRANE COMPONENT OF SEC PROTEIN SECRETION SYSTEM"/>
    <property type="match status" value="1"/>
</dbReference>
<dbReference type="Pfam" id="PF21090">
    <property type="entry name" value="P-loop_SecA"/>
    <property type="match status" value="1"/>
</dbReference>
<dbReference type="Pfam" id="PF02810">
    <property type="entry name" value="SEC-C"/>
    <property type="match status" value="1"/>
</dbReference>
<dbReference type="Pfam" id="PF07517">
    <property type="entry name" value="SecA_DEAD"/>
    <property type="match status" value="1"/>
</dbReference>
<dbReference type="Pfam" id="PF01043">
    <property type="entry name" value="SecA_PP_bind"/>
    <property type="match status" value="1"/>
</dbReference>
<dbReference type="Pfam" id="PF07516">
    <property type="entry name" value="SecA_SW"/>
    <property type="match status" value="1"/>
</dbReference>
<dbReference type="PRINTS" id="PR00906">
    <property type="entry name" value="SECA"/>
</dbReference>
<dbReference type="SMART" id="SM00957">
    <property type="entry name" value="SecA_DEAD"/>
    <property type="match status" value="1"/>
</dbReference>
<dbReference type="SMART" id="SM00958">
    <property type="entry name" value="SecA_PP_bind"/>
    <property type="match status" value="1"/>
</dbReference>
<dbReference type="SUPFAM" id="SSF81886">
    <property type="entry name" value="Helical scaffold and wing domains of SecA"/>
    <property type="match status" value="1"/>
</dbReference>
<dbReference type="SUPFAM" id="SSF52540">
    <property type="entry name" value="P-loop containing nucleoside triphosphate hydrolases"/>
    <property type="match status" value="2"/>
</dbReference>
<dbReference type="SUPFAM" id="SSF81767">
    <property type="entry name" value="Pre-protein crosslinking domain of SecA"/>
    <property type="match status" value="1"/>
</dbReference>
<dbReference type="PROSITE" id="PS01312">
    <property type="entry name" value="SECA"/>
    <property type="match status" value="1"/>
</dbReference>
<dbReference type="PROSITE" id="PS51196">
    <property type="entry name" value="SECA_MOTOR_DEAD"/>
    <property type="match status" value="1"/>
</dbReference>
<reference key="1">
    <citation type="submission" date="2007-09" db="EMBL/GenBank/DDBJ databases">
        <title>Complete sequence of chromosome of Serratia proteamaculans 568.</title>
        <authorList>
            <consortium name="US DOE Joint Genome Institute"/>
            <person name="Copeland A."/>
            <person name="Lucas S."/>
            <person name="Lapidus A."/>
            <person name="Barry K."/>
            <person name="Glavina del Rio T."/>
            <person name="Dalin E."/>
            <person name="Tice H."/>
            <person name="Pitluck S."/>
            <person name="Chain P."/>
            <person name="Malfatti S."/>
            <person name="Shin M."/>
            <person name="Vergez L."/>
            <person name="Schmutz J."/>
            <person name="Larimer F."/>
            <person name="Land M."/>
            <person name="Hauser L."/>
            <person name="Kyrpides N."/>
            <person name="Kim E."/>
            <person name="Taghavi S."/>
            <person name="Newman L."/>
            <person name="Vangronsveld J."/>
            <person name="van der Lelie D."/>
            <person name="Richardson P."/>
        </authorList>
    </citation>
    <scope>NUCLEOTIDE SEQUENCE [LARGE SCALE GENOMIC DNA]</scope>
    <source>
        <strain>568</strain>
    </source>
</reference>
<name>SECA_SERP5</name>
<organism>
    <name type="scientific">Serratia proteamaculans (strain 568)</name>
    <dbReference type="NCBI Taxonomy" id="399741"/>
    <lineage>
        <taxon>Bacteria</taxon>
        <taxon>Pseudomonadati</taxon>
        <taxon>Pseudomonadota</taxon>
        <taxon>Gammaproteobacteria</taxon>
        <taxon>Enterobacterales</taxon>
        <taxon>Yersiniaceae</taxon>
        <taxon>Serratia</taxon>
    </lineage>
</organism>
<gene>
    <name evidence="1" type="primary">secA</name>
    <name type="ordered locus">Spro_0770</name>
</gene>
<proteinExistence type="inferred from homology"/>